<sequence>MADFFQNGVITTLQNFRNRSLEELEYELELFSKRRNMVLLLPALYSEFEGPAMPKIIQELKDIRYLYKIVLSLDRATEEEFKKVKKIMSEINTEVKVIWHDGPRMQRLYRELEEAGFNVSIPGKGRSVWMSLGYILSDADAYAIALHDCDIVNYSRELPARLLYPVVHPALDFEFSKGYYARVTHKLYGRVTRIFYTPLIRALIRILGCNRFLVYLDSFRYALSGEFAFIRTLARGIRISPTWGLEVSMLSEVYQNTSFNRICQVEVMDTYEHKHQKLVKSTSEGLVKMASDIAKTLFRVLAHDGFVFSEAFFRTLLTTYLQEARYAIEKYNALSLINGLTYDRHAEIEAIEVFVDALKKAEKEFIEDPIGVPLMSAWVRVRAALPEISDKLIRAVEEDNSDD</sequence>
<organism>
    <name type="scientific">Persephonella marina (strain DSM 14350 / EX-H1)</name>
    <dbReference type="NCBI Taxonomy" id="123214"/>
    <lineage>
        <taxon>Bacteria</taxon>
        <taxon>Pseudomonadati</taxon>
        <taxon>Aquificota</taxon>
        <taxon>Aquificia</taxon>
        <taxon>Aquificales</taxon>
        <taxon>Hydrogenothermaceae</taxon>
        <taxon>Persephonella</taxon>
    </lineage>
</organism>
<gene>
    <name evidence="3" type="primary">gpgS</name>
    <name type="ordered locus">PERMA_1582</name>
</gene>
<reference key="1">
    <citation type="journal article" date="2009" name="J. Bacteriol.">
        <title>Complete and draft genome sequences of six members of the Aquificales.</title>
        <authorList>
            <person name="Reysenbach A.-L."/>
            <person name="Hamamura N."/>
            <person name="Podar M."/>
            <person name="Griffiths E."/>
            <person name="Ferreira S."/>
            <person name="Hochstein R."/>
            <person name="Heidelberg J."/>
            <person name="Johnson J."/>
            <person name="Mead D."/>
            <person name="Pohorille A."/>
            <person name="Sarmiento M."/>
            <person name="Schweighofer K."/>
            <person name="Seshadri R."/>
            <person name="Voytek M.A."/>
        </authorList>
    </citation>
    <scope>NUCLEOTIDE SEQUENCE [LARGE SCALE GENOMIC DNA]</scope>
    <source>
        <strain>DSM 14350 / EX-H1</strain>
    </source>
</reference>
<reference key="2">
    <citation type="journal article" date="2007" name="J. Bacteriol.">
        <title>Glucosylglycerate biosynthesis in the deepest lineage of the Bacteria: characterization of the thermophilic proteins GpgS and GpgP from Persephonella marina.</title>
        <authorList>
            <person name="Costa J."/>
            <person name="Empadinhas N."/>
            <person name="da Costa M.S."/>
        </authorList>
    </citation>
    <scope>FUNCTION</scope>
    <scope>CATALYTIC ACTIVITY</scope>
    <scope>BIOPHYSICOCHEMICAL PROPERTIES</scope>
    <scope>COFACTOR</scope>
    <scope>SUBSTRATE SPECIFICITY</scope>
    <scope>SUBUNIT</scope>
</reference>
<evidence type="ECO:0000250" key="1">
    <source>
        <dbReference type="UniProtKB" id="P9WMW9"/>
    </source>
</evidence>
<evidence type="ECO:0000269" key="2">
    <source>
    </source>
</evidence>
<evidence type="ECO:0000303" key="3">
    <source>
    </source>
</evidence>
<evidence type="ECO:0000305" key="4"/>
<keyword id="KW-0170">Cobalt</keyword>
<keyword id="KW-0328">Glycosyltransferase</keyword>
<keyword id="KW-0460">Magnesium</keyword>
<keyword id="KW-0464">Manganese</keyword>
<keyword id="KW-0479">Metal-binding</keyword>
<keyword id="KW-0533">Nickel</keyword>
<keyword id="KW-1185">Reference proteome</keyword>
<keyword id="KW-0808">Transferase</keyword>
<proteinExistence type="evidence at protein level"/>
<accession>C0QRQ2</accession>
<protein>
    <recommendedName>
        <fullName evidence="3">Glucosyl-3-phosphoglycerate synthase</fullName>
        <shortName evidence="3">GpgS</shortName>
        <ecNumber evidence="2">2.4.1.266</ecNumber>
    </recommendedName>
</protein>
<comment type="function">
    <text evidence="2">Involved in the biosynthesis of 6-O-methylglucose lipopolysaccarides (MGLPs). Catalyzes the transfer of a glucose (Glc) moiety from uridine diphosphate (UDP-Glc) to the position 2 of 3-phospho-D-glycerate (3-PGA) to form glucosyl-3-phosphoglycerate (GPG). GpgS is most active with UDP-glucose, followed by GDP-glucose, ADP-glucose, and to a lesser extent, TDP-glucose. 3-PGA is the only acceptor for these glucosyl donors.</text>
</comment>
<comment type="catalytic activity">
    <reaction evidence="2">
        <text>an NDP-alpha-D-glucose + (2R)-3-phosphoglycerate = (2R)-2-O-(alpha-D-glucopyranosyl)-3-phospho-glycerate + a ribonucleoside 5'-diphosphate + H(+)</text>
        <dbReference type="Rhea" id="RHEA:47244"/>
        <dbReference type="ChEBI" id="CHEBI:15378"/>
        <dbReference type="ChEBI" id="CHEBI:57930"/>
        <dbReference type="ChEBI" id="CHEBI:58272"/>
        <dbReference type="ChEBI" id="CHEBI:62600"/>
        <dbReference type="ChEBI" id="CHEBI:76533"/>
        <dbReference type="EC" id="2.4.1.266"/>
    </reaction>
</comment>
<comment type="cofactor">
    <cofactor evidence="2">
        <name>Mn(2+)</name>
        <dbReference type="ChEBI" id="CHEBI:29035"/>
    </cofactor>
    <cofactor evidence="2">
        <name>Co(2+)</name>
        <dbReference type="ChEBI" id="CHEBI:48828"/>
    </cofactor>
    <cofactor evidence="2">
        <name>Mg(2+)</name>
        <dbReference type="ChEBI" id="CHEBI:18420"/>
    </cofactor>
    <cofactor evidence="2">
        <name>Ni(2+)</name>
        <dbReference type="ChEBI" id="CHEBI:49786"/>
    </cofactor>
    <text evidence="2">Requires divalent cations for activity in the following order of efficiency: Mn(2+), Co(2+), Mg(2+) and Ni(2+) ions.</text>
</comment>
<comment type="biophysicochemical properties">
    <kinetics>
        <KM evidence="2">0.09 mM for 3-PGA (at 70 degrees Celsius)</KM>
        <KM evidence="2">0.25 mM for 3-PGA (at 85 degrees Celsius)</KM>
        <KM evidence="2">0.3 mM for 3-PGA (at 90 degrees Celsius)</KM>
        <KM evidence="2">1.47 mM for UDP-glucose (at 70 degrees Celsius)</KM>
        <KM evidence="2">1.55 mM for UDP-glucose (at 85 degrees Celsius)</KM>
        <KM evidence="2">1.58 mM for UDP-glucose (at 90 degrees Celsius)</KM>
        <Vmax evidence="2">51.5 umol/min/mg enzyme with 3-PGA as substrate (at 70 degrees Celsius)</Vmax>
        <Vmax evidence="2">110.0 umol/min/mg enzyme with 3-PGA as substrate (at 85 degrees Celsius)</Vmax>
        <Vmax evidence="2">128.0 umol/min/mg enzyme with 3-PGA as substrate (at 90 degrees Celsius)</Vmax>
        <Vmax evidence="2">66.0 umol/min/mg enzyme with UDP-glucose as substrate (at 70 degrees Celsius)</Vmax>
        <Vmax evidence="2">98.0 umol/min/mg enzyme with UDP-glucose as substrate (at 85 degrees Celsius)</Vmax>
        <Vmax evidence="2">106.0 umol/min/mg enzyme with UDP-glucose as substrate (at 90 degrees Celsius)</Vmax>
    </kinetics>
    <phDependence>
        <text evidence="2">Optimum pH is 8.</text>
    </phDependence>
    <temperatureDependence>
        <text evidence="2">Optimum temperature is 90 degrees Celsius. GpgS is inactive at 40 degrees Celsius, but the activity increases dramatically above 50 degrees Celsius. At 100 degrees Celsius, GpgS retains 33% of the total activity.</text>
    </temperatureDependence>
</comment>
<comment type="subunit">
    <text evidence="2">Homodimer.</text>
</comment>
<comment type="similarity">
    <text evidence="4">Belongs to the glycosyltransferase 2 family.</text>
</comment>
<dbReference type="EC" id="2.4.1.266" evidence="2"/>
<dbReference type="EMBL" id="CP001230">
    <property type="protein sequence ID" value="ACO04915.1"/>
    <property type="molecule type" value="Genomic_DNA"/>
</dbReference>
<dbReference type="RefSeq" id="WP_015899019.1">
    <property type="nucleotide sequence ID" value="NC_012440.1"/>
</dbReference>
<dbReference type="SMR" id="C0QRQ2"/>
<dbReference type="STRING" id="123214.PERMA_1582"/>
<dbReference type="PaxDb" id="123214-PERMA_1582"/>
<dbReference type="KEGG" id="pmx:PERMA_1582"/>
<dbReference type="eggNOG" id="COG1215">
    <property type="taxonomic scope" value="Bacteria"/>
</dbReference>
<dbReference type="HOGENOM" id="CLU_056498_0_0_0"/>
<dbReference type="OrthoDB" id="9477at2"/>
<dbReference type="Proteomes" id="UP000001366">
    <property type="component" value="Chromosome"/>
</dbReference>
<dbReference type="GO" id="GO:0016757">
    <property type="term" value="F:glycosyltransferase activity"/>
    <property type="evidence" value="ECO:0007669"/>
    <property type="project" value="UniProtKB-KW"/>
</dbReference>
<dbReference type="GO" id="GO:0046872">
    <property type="term" value="F:metal ion binding"/>
    <property type="evidence" value="ECO:0007669"/>
    <property type="project" value="UniProtKB-KW"/>
</dbReference>
<dbReference type="Gene3D" id="3.90.550.10">
    <property type="entry name" value="Spore Coat Polysaccharide Biosynthesis Protein SpsA, Chain A"/>
    <property type="match status" value="1"/>
</dbReference>
<dbReference type="InterPro" id="IPR029044">
    <property type="entry name" value="Nucleotide-diphossugar_trans"/>
</dbReference>
<dbReference type="SUPFAM" id="SSF53448">
    <property type="entry name" value="Nucleotide-diphospho-sugar transferases"/>
    <property type="match status" value="1"/>
</dbReference>
<name>GPGS_PERMH</name>
<feature type="chain" id="PRO_0000420168" description="Glucosyl-3-phosphoglycerate synthase">
    <location>
        <begin position="1"/>
        <end position="403"/>
    </location>
</feature>
<feature type="binding site" evidence="1">
    <location>
        <position position="150"/>
    </location>
    <ligand>
        <name>a divalent metal cation</name>
        <dbReference type="ChEBI" id="CHEBI:60240"/>
    </ligand>
</feature>
<feature type="binding site" evidence="1">
    <location>
        <begin position="189"/>
        <end position="192"/>
    </location>
    <ligand>
        <name>(2R)-3-phosphoglycerate</name>
        <dbReference type="ChEBI" id="CHEBI:58272"/>
    </ligand>
</feature>
<feature type="binding site" evidence="1">
    <location>
        <position position="273"/>
    </location>
    <ligand>
        <name>a divalent metal cation</name>
        <dbReference type="ChEBI" id="CHEBI:60240"/>
    </ligand>
</feature>